<evidence type="ECO:0000255" key="1">
    <source>
        <dbReference type="HAMAP-Rule" id="MF_01703"/>
    </source>
</evidence>
<comment type="function">
    <text evidence="1">Involved in lipopolysaccharide (LPS) biosynthesis. Translocates lipid A-core from the inner to the outer leaflet of the inner membrane. Transmembrane domains (TMD) form a pore in the inner membrane and the ATP-binding domain (NBD) is responsible for energy generation.</text>
</comment>
<comment type="catalytic activity">
    <reaction evidence="1">
        <text>ATP + H2O + lipid A-core oligosaccharideSide 1 = ADP + phosphate + lipid A-core oligosaccharideSide 2.</text>
        <dbReference type="EC" id="7.5.2.6"/>
    </reaction>
</comment>
<comment type="subunit">
    <text evidence="1">Homodimer.</text>
</comment>
<comment type="subcellular location">
    <subcellularLocation>
        <location evidence="1">Cell inner membrane</location>
        <topology evidence="1">Multi-pass membrane protein</topology>
    </subcellularLocation>
</comment>
<comment type="domain">
    <text evidence="1">In MsbA the ATP-binding domain (NBD) and the transmembrane domain (TMD) are fused.</text>
</comment>
<comment type="similarity">
    <text evidence="1">Belongs to the ABC transporter superfamily. Lipid exporter (TC 3.A.1.106) family.</text>
</comment>
<keyword id="KW-0067">ATP-binding</keyword>
<keyword id="KW-0997">Cell inner membrane</keyword>
<keyword id="KW-1003">Cell membrane</keyword>
<keyword id="KW-0445">Lipid transport</keyword>
<keyword id="KW-0472">Membrane</keyword>
<keyword id="KW-0547">Nucleotide-binding</keyword>
<keyword id="KW-1185">Reference proteome</keyword>
<keyword id="KW-1278">Translocase</keyword>
<keyword id="KW-0812">Transmembrane</keyword>
<keyword id="KW-1133">Transmembrane helix</keyword>
<keyword id="KW-0813">Transport</keyword>
<organism>
    <name type="scientific">Cupriavidus metallidurans (strain ATCC 43123 / DSM 2839 / NBRC 102507 / CH34)</name>
    <name type="common">Ralstonia metallidurans</name>
    <dbReference type="NCBI Taxonomy" id="266264"/>
    <lineage>
        <taxon>Bacteria</taxon>
        <taxon>Pseudomonadati</taxon>
        <taxon>Pseudomonadota</taxon>
        <taxon>Betaproteobacteria</taxon>
        <taxon>Burkholderiales</taxon>
        <taxon>Burkholderiaceae</taxon>
        <taxon>Cupriavidus</taxon>
    </lineage>
</organism>
<sequence>MASGANVTDNKQQTPQESDTLKRVWAYLKPEKRNFVLAIIAMGLVAASEGIIPKVVNDLLDKGFGGSYAGKLWHVPALLVGVALVRGLAQFASGYLLSQISNGVLLKMRMQMFDRMLHAPALFFHRNTAASLINAVIFEVNQVMQILTGVLITLVRDSLTVVALLIYLFYTNWKLTLVVAVLLPAIGFVMSKVNRRLRRLNREHQALTNTAAYVVEESVGGFKVVKLHGGEAYEMSRFEAMAERLRGYSMRMAVAGGLNQPVTAFLASLALSVILTIAMIQAQGNQTTIGGFTGFVMAMLLLISPLKHLADLNQPLQRGLTAAEMIFGLIDEPIEPQNGGLPLERARGDLVFDNVGFRYGDAARAALNHVSLRAAPGEVVALVGPSGSGKTTLVNLVPRFFDPTEGHILLDGQPIDRFALADLRRQIAFVSQDVVLFNDTVAANVAYGVHPREKIDMARVERALAAAYLTDVVKGLPEGLETNIGDNGMKLSGGQRQRLAIARAIYKDAPILILDEATSALDSESERQVQAALESLMVGRTTLVIAHRLSTIENADRIVVLEQGRVAEQGSHAELIGKNGLYAGLHRIQFASQA</sequence>
<protein>
    <recommendedName>
        <fullName evidence="1">ATP-dependent lipid A-core flippase</fullName>
        <ecNumber evidence="1">7.5.2.6</ecNumber>
    </recommendedName>
    <alternativeName>
        <fullName evidence="1">Lipid A export ATP-binding/permease protein MsbA</fullName>
    </alternativeName>
</protein>
<accession>Q1LQD3</accession>
<gene>
    <name evidence="1" type="primary">msbA</name>
    <name type="ordered locus">Rmet_0757</name>
</gene>
<proteinExistence type="inferred from homology"/>
<dbReference type="EC" id="7.5.2.6" evidence="1"/>
<dbReference type="EMBL" id="CP000352">
    <property type="protein sequence ID" value="ABF07643.1"/>
    <property type="molecule type" value="Genomic_DNA"/>
</dbReference>
<dbReference type="SMR" id="Q1LQD3"/>
<dbReference type="STRING" id="266264.Rmet_0757"/>
<dbReference type="KEGG" id="rme:Rmet_0757"/>
<dbReference type="eggNOG" id="COG1132">
    <property type="taxonomic scope" value="Bacteria"/>
</dbReference>
<dbReference type="HOGENOM" id="CLU_000604_84_3_4"/>
<dbReference type="Proteomes" id="UP000002429">
    <property type="component" value="Chromosome"/>
</dbReference>
<dbReference type="GO" id="GO:0005886">
    <property type="term" value="C:plasma membrane"/>
    <property type="evidence" value="ECO:0007669"/>
    <property type="project" value="UniProtKB-SubCell"/>
</dbReference>
<dbReference type="GO" id="GO:0015421">
    <property type="term" value="F:ABC-type oligopeptide transporter activity"/>
    <property type="evidence" value="ECO:0007669"/>
    <property type="project" value="TreeGrafter"/>
</dbReference>
<dbReference type="GO" id="GO:0005524">
    <property type="term" value="F:ATP binding"/>
    <property type="evidence" value="ECO:0007669"/>
    <property type="project" value="UniProtKB-KW"/>
</dbReference>
<dbReference type="GO" id="GO:0016887">
    <property type="term" value="F:ATP hydrolysis activity"/>
    <property type="evidence" value="ECO:0007669"/>
    <property type="project" value="InterPro"/>
</dbReference>
<dbReference type="GO" id="GO:0034040">
    <property type="term" value="F:ATPase-coupled lipid transmembrane transporter activity"/>
    <property type="evidence" value="ECO:0007669"/>
    <property type="project" value="InterPro"/>
</dbReference>
<dbReference type="CDD" id="cd18552">
    <property type="entry name" value="ABC_6TM_MsbA_like"/>
    <property type="match status" value="1"/>
</dbReference>
<dbReference type="FunFam" id="3.40.50.300:FF:000221">
    <property type="entry name" value="Multidrug ABC transporter ATP-binding protein"/>
    <property type="match status" value="1"/>
</dbReference>
<dbReference type="Gene3D" id="1.20.1560.10">
    <property type="entry name" value="ABC transporter type 1, transmembrane domain"/>
    <property type="match status" value="1"/>
</dbReference>
<dbReference type="Gene3D" id="3.40.50.300">
    <property type="entry name" value="P-loop containing nucleotide triphosphate hydrolases"/>
    <property type="match status" value="1"/>
</dbReference>
<dbReference type="InterPro" id="IPR003593">
    <property type="entry name" value="AAA+_ATPase"/>
</dbReference>
<dbReference type="InterPro" id="IPR011527">
    <property type="entry name" value="ABC1_TM_dom"/>
</dbReference>
<dbReference type="InterPro" id="IPR036640">
    <property type="entry name" value="ABC1_TM_sf"/>
</dbReference>
<dbReference type="InterPro" id="IPR003439">
    <property type="entry name" value="ABC_transporter-like_ATP-bd"/>
</dbReference>
<dbReference type="InterPro" id="IPR017871">
    <property type="entry name" value="ABC_transporter-like_CS"/>
</dbReference>
<dbReference type="InterPro" id="IPR011917">
    <property type="entry name" value="ABC_transpr_lipidA"/>
</dbReference>
<dbReference type="InterPro" id="IPR027417">
    <property type="entry name" value="P-loop_NTPase"/>
</dbReference>
<dbReference type="InterPro" id="IPR039421">
    <property type="entry name" value="Type_1_exporter"/>
</dbReference>
<dbReference type="NCBIfam" id="TIGR02203">
    <property type="entry name" value="MsbA_lipidA"/>
    <property type="match status" value="1"/>
</dbReference>
<dbReference type="PANTHER" id="PTHR43394:SF1">
    <property type="entry name" value="ATP-BINDING CASSETTE SUB-FAMILY B MEMBER 10, MITOCHONDRIAL"/>
    <property type="match status" value="1"/>
</dbReference>
<dbReference type="PANTHER" id="PTHR43394">
    <property type="entry name" value="ATP-DEPENDENT PERMEASE MDL1, MITOCHONDRIAL"/>
    <property type="match status" value="1"/>
</dbReference>
<dbReference type="Pfam" id="PF00664">
    <property type="entry name" value="ABC_membrane"/>
    <property type="match status" value="1"/>
</dbReference>
<dbReference type="Pfam" id="PF00005">
    <property type="entry name" value="ABC_tran"/>
    <property type="match status" value="1"/>
</dbReference>
<dbReference type="SMART" id="SM00382">
    <property type="entry name" value="AAA"/>
    <property type="match status" value="1"/>
</dbReference>
<dbReference type="SUPFAM" id="SSF90123">
    <property type="entry name" value="ABC transporter transmembrane region"/>
    <property type="match status" value="1"/>
</dbReference>
<dbReference type="SUPFAM" id="SSF52540">
    <property type="entry name" value="P-loop containing nucleoside triphosphate hydrolases"/>
    <property type="match status" value="1"/>
</dbReference>
<dbReference type="PROSITE" id="PS50929">
    <property type="entry name" value="ABC_TM1F"/>
    <property type="match status" value="1"/>
</dbReference>
<dbReference type="PROSITE" id="PS00211">
    <property type="entry name" value="ABC_TRANSPORTER_1"/>
    <property type="match status" value="1"/>
</dbReference>
<dbReference type="PROSITE" id="PS50893">
    <property type="entry name" value="ABC_TRANSPORTER_2"/>
    <property type="match status" value="1"/>
</dbReference>
<dbReference type="PROSITE" id="PS51239">
    <property type="entry name" value="MSBA"/>
    <property type="match status" value="1"/>
</dbReference>
<name>MSBA_CUPMC</name>
<reference key="1">
    <citation type="journal article" date="2010" name="PLoS ONE">
        <title>The complete genome sequence of Cupriavidus metallidurans strain CH34, a master survivalist in harsh and anthropogenic environments.</title>
        <authorList>
            <person name="Janssen P.J."/>
            <person name="Van Houdt R."/>
            <person name="Moors H."/>
            <person name="Monsieurs P."/>
            <person name="Morin N."/>
            <person name="Michaux A."/>
            <person name="Benotmane M.A."/>
            <person name="Leys N."/>
            <person name="Vallaeys T."/>
            <person name="Lapidus A."/>
            <person name="Monchy S."/>
            <person name="Medigue C."/>
            <person name="Taghavi S."/>
            <person name="McCorkle S."/>
            <person name="Dunn J."/>
            <person name="van der Lelie D."/>
            <person name="Mergeay M."/>
        </authorList>
    </citation>
    <scope>NUCLEOTIDE SEQUENCE [LARGE SCALE GENOMIC DNA]</scope>
    <source>
        <strain>ATCC 43123 / DSM 2839 / NBRC 102507 / CH34</strain>
    </source>
</reference>
<feature type="chain" id="PRO_0000271647" description="ATP-dependent lipid A-core flippase">
    <location>
        <begin position="1"/>
        <end position="594"/>
    </location>
</feature>
<feature type="transmembrane region" description="Helical" evidence="1">
    <location>
        <begin position="35"/>
        <end position="55"/>
    </location>
</feature>
<feature type="transmembrane region" description="Helical" evidence="1">
    <location>
        <begin position="64"/>
        <end position="84"/>
    </location>
</feature>
<feature type="transmembrane region" description="Helical" evidence="1">
    <location>
        <begin position="135"/>
        <end position="155"/>
    </location>
</feature>
<feature type="transmembrane region" description="Helical" evidence="1">
    <location>
        <begin position="161"/>
        <end position="181"/>
    </location>
</feature>
<feature type="transmembrane region" description="Helical" evidence="1">
    <location>
        <begin position="262"/>
        <end position="282"/>
    </location>
</feature>
<feature type="transmembrane region" description="Helical" evidence="1">
    <location>
        <begin position="289"/>
        <end position="309"/>
    </location>
</feature>
<feature type="domain" description="ABC transmembrane type-1" evidence="1">
    <location>
        <begin position="36"/>
        <end position="318"/>
    </location>
</feature>
<feature type="domain" description="ABC transporter" evidence="1">
    <location>
        <begin position="350"/>
        <end position="588"/>
    </location>
</feature>
<feature type="binding site" evidence="1">
    <location>
        <begin position="384"/>
        <end position="391"/>
    </location>
    <ligand>
        <name>ATP</name>
        <dbReference type="ChEBI" id="CHEBI:30616"/>
    </ligand>
</feature>